<comment type="function">
    <text evidence="1">Converts N-acetylmannosamine-6-phosphate (ManNAc-6-P) to N-acetylglucosamine-6-phosphate (GlcNAc-6-P).</text>
</comment>
<comment type="catalytic activity">
    <reaction evidence="1">
        <text>an N-acyl-D-glucosamine 6-phosphate = an N-acyl-D-mannosamine 6-phosphate</text>
        <dbReference type="Rhea" id="RHEA:23932"/>
        <dbReference type="ChEBI" id="CHEBI:57599"/>
        <dbReference type="ChEBI" id="CHEBI:57666"/>
        <dbReference type="EC" id="5.1.3.9"/>
    </reaction>
</comment>
<comment type="pathway">
    <text evidence="1">Amino-sugar metabolism; N-acetylneuraminate degradation; D-fructose 6-phosphate from N-acetylneuraminate: step 3/5.</text>
</comment>
<comment type="similarity">
    <text evidence="1">Belongs to the NanE family.</text>
</comment>
<name>NANE_STRPC</name>
<sequence length="234" mass="25018">MPDKPTKEKLMEQLKGGIIVSCQALPGEPLYSETGGIMPLLAKAAQEAGAVGIRANSVRDIKEIQAITDLPIIGIIKKDYPPQEPFITATMAEVDQLAALNIAVIAMDCTKRDRHDGLDIASFIRQVKEKYPNQLLMADISTFDEGLVAHQAGIDFVGTTLSGYTPYSRQEAGPDVALIEALCKAGIAVIAEGKIHSPEEAKKINDLGVAGIVVGGAITRPKEIAERFIEALKS</sequence>
<evidence type="ECO:0000255" key="1">
    <source>
        <dbReference type="HAMAP-Rule" id="MF_01235"/>
    </source>
</evidence>
<reference key="1">
    <citation type="journal article" date="2006" name="Proc. Natl. Acad. Sci. U.S.A.">
        <title>Molecular genetic anatomy of inter- and intraserotype variation in the human bacterial pathogen group A Streptococcus.</title>
        <authorList>
            <person name="Beres S.B."/>
            <person name="Richter E.W."/>
            <person name="Nagiec M.J."/>
            <person name="Sumby P."/>
            <person name="Porcella S.F."/>
            <person name="DeLeo F.R."/>
            <person name="Musser J.M."/>
        </authorList>
    </citation>
    <scope>NUCLEOTIDE SEQUENCE [LARGE SCALE GENOMIC DNA]</scope>
    <source>
        <strain>MGAS9429</strain>
    </source>
</reference>
<organism>
    <name type="scientific">Streptococcus pyogenes serotype M12 (strain MGAS9429)</name>
    <dbReference type="NCBI Taxonomy" id="370551"/>
    <lineage>
        <taxon>Bacteria</taxon>
        <taxon>Bacillati</taxon>
        <taxon>Bacillota</taxon>
        <taxon>Bacilli</taxon>
        <taxon>Lactobacillales</taxon>
        <taxon>Streptococcaceae</taxon>
        <taxon>Streptococcus</taxon>
    </lineage>
</organism>
<keyword id="KW-0119">Carbohydrate metabolism</keyword>
<keyword id="KW-0413">Isomerase</keyword>
<protein>
    <recommendedName>
        <fullName evidence="1">Putative N-acetylmannosamine-6-phosphate 2-epimerase</fullName>
        <ecNumber evidence="1">5.1.3.9</ecNumber>
    </recommendedName>
    <alternativeName>
        <fullName evidence="1">ManNAc-6-P epimerase</fullName>
    </alternativeName>
</protein>
<accession>Q1JNJ8</accession>
<dbReference type="EC" id="5.1.3.9" evidence="1"/>
<dbReference type="EMBL" id="CP000259">
    <property type="protein sequence ID" value="ABF31401.1"/>
    <property type="molecule type" value="Genomic_DNA"/>
</dbReference>
<dbReference type="RefSeq" id="WP_002991176.1">
    <property type="nucleotide sequence ID" value="NC_008021.1"/>
</dbReference>
<dbReference type="SMR" id="Q1JNJ8"/>
<dbReference type="KEGG" id="spk:MGAS9429_Spy0213"/>
<dbReference type="HOGENOM" id="CLU_086300_1_0_9"/>
<dbReference type="UniPathway" id="UPA00629">
    <property type="reaction ID" value="UER00682"/>
</dbReference>
<dbReference type="Proteomes" id="UP000002433">
    <property type="component" value="Chromosome"/>
</dbReference>
<dbReference type="GO" id="GO:0005829">
    <property type="term" value="C:cytosol"/>
    <property type="evidence" value="ECO:0007669"/>
    <property type="project" value="TreeGrafter"/>
</dbReference>
<dbReference type="GO" id="GO:0047465">
    <property type="term" value="F:N-acylglucosamine-6-phosphate 2-epimerase activity"/>
    <property type="evidence" value="ECO:0007669"/>
    <property type="project" value="UniProtKB-EC"/>
</dbReference>
<dbReference type="GO" id="GO:0005975">
    <property type="term" value="P:carbohydrate metabolic process"/>
    <property type="evidence" value="ECO:0007669"/>
    <property type="project" value="UniProtKB-UniRule"/>
</dbReference>
<dbReference type="GO" id="GO:0006053">
    <property type="term" value="P:N-acetylmannosamine catabolic process"/>
    <property type="evidence" value="ECO:0007669"/>
    <property type="project" value="TreeGrafter"/>
</dbReference>
<dbReference type="GO" id="GO:0019262">
    <property type="term" value="P:N-acetylneuraminate catabolic process"/>
    <property type="evidence" value="ECO:0007669"/>
    <property type="project" value="UniProtKB-UniRule"/>
</dbReference>
<dbReference type="CDD" id="cd04729">
    <property type="entry name" value="NanE"/>
    <property type="match status" value="1"/>
</dbReference>
<dbReference type="FunFam" id="3.20.20.70:FF:000035">
    <property type="entry name" value="Putative N-acetylmannosamine-6-phosphate 2-epimerase"/>
    <property type="match status" value="1"/>
</dbReference>
<dbReference type="Gene3D" id="3.20.20.70">
    <property type="entry name" value="Aldolase class I"/>
    <property type="match status" value="1"/>
</dbReference>
<dbReference type="HAMAP" id="MF_01235">
    <property type="entry name" value="ManNAc6P_epimer"/>
    <property type="match status" value="1"/>
</dbReference>
<dbReference type="InterPro" id="IPR013785">
    <property type="entry name" value="Aldolase_TIM"/>
</dbReference>
<dbReference type="InterPro" id="IPR007260">
    <property type="entry name" value="NanE"/>
</dbReference>
<dbReference type="InterPro" id="IPR011060">
    <property type="entry name" value="RibuloseP-bd_barrel"/>
</dbReference>
<dbReference type="NCBIfam" id="NF002231">
    <property type="entry name" value="PRK01130.1"/>
    <property type="match status" value="1"/>
</dbReference>
<dbReference type="PANTHER" id="PTHR36204">
    <property type="entry name" value="N-ACETYLMANNOSAMINE-6-PHOSPHATE 2-EPIMERASE-RELATED"/>
    <property type="match status" value="1"/>
</dbReference>
<dbReference type="PANTHER" id="PTHR36204:SF1">
    <property type="entry name" value="N-ACETYLMANNOSAMINE-6-PHOSPHATE 2-EPIMERASE-RELATED"/>
    <property type="match status" value="1"/>
</dbReference>
<dbReference type="Pfam" id="PF04131">
    <property type="entry name" value="NanE"/>
    <property type="match status" value="1"/>
</dbReference>
<dbReference type="SUPFAM" id="SSF51366">
    <property type="entry name" value="Ribulose-phoshate binding barrel"/>
    <property type="match status" value="1"/>
</dbReference>
<proteinExistence type="inferred from homology"/>
<gene>
    <name evidence="1" type="primary">nanE</name>
    <name type="ordered locus">MGAS9429_Spy0213</name>
</gene>
<feature type="chain" id="PRO_0000301491" description="Putative N-acetylmannosamine-6-phosphate 2-epimerase">
    <location>
        <begin position="1"/>
        <end position="234"/>
    </location>
</feature>